<reference key="1">
    <citation type="journal article" date="1997" name="DNA Seq.">
        <title>Further sequence analysis of the DNA regions with the Rhodococcus 20S proteasome structural genes reveals extensive homology with Mycobacterium leprae.</title>
        <authorList>
            <person name="Nagy I."/>
            <person name="Schoofs G."/>
            <person name="Vanderleyden J."/>
            <person name="De Mot R."/>
        </authorList>
    </citation>
    <scope>NUCLEOTIDE SEQUENCE [GENOMIC DNA]</scope>
    <source>
        <strain>NI86/21</strain>
    </source>
</reference>
<gene>
    <name evidence="1" type="primary">pafA1</name>
    <name type="ORF">ORF9(1)</name>
</gene>
<comment type="function">
    <text evidence="1">Catalyzes the covalent attachment of the prokaryotic ubiquitin-like protein modifier Pup to the proteasomal substrate proteins, thereby targeting them for proteasomal degradation. This tagging system is termed pupylation. The ligation reaction involves the side-chain carboxylate of the C-terminal glutamate of Pup and the side-chain amino group of a substrate lysine.</text>
</comment>
<comment type="catalytic activity">
    <reaction evidence="1">
        <text>ATP + [prokaryotic ubiquitin-like protein]-L-glutamate + [protein]-L-lysine = ADP + phosphate + N(6)-([prokaryotic ubiquitin-like protein]-gamma-L-glutamyl)-[protein]-L-lysine.</text>
        <dbReference type="EC" id="6.3.1.19"/>
    </reaction>
</comment>
<comment type="pathway">
    <text evidence="1">Protein degradation; proteasomal Pup-dependent pathway.</text>
</comment>
<comment type="pathway">
    <text evidence="1">Protein modification; protein pupylation.</text>
</comment>
<comment type="miscellaneous">
    <text evidence="1">The reaction mechanism probably proceeds via the activation of Pup by phosphorylation of its C-terminal glutamate, which is then subject to nucleophilic attack by the substrate lysine, resulting in an isopeptide bond and the release of phosphate as a good leaving group.</text>
</comment>
<comment type="similarity">
    <text evidence="1">Belongs to the Pup ligase/Pup deamidase family. Pup-conjugating enzyme subfamily.</text>
</comment>
<comment type="sequence caution" evidence="2">
    <conflict type="erroneous initiation">
        <sequence resource="EMBL-CDS" id="CAB04762"/>
    </conflict>
    <text>Truncated N-terminus.</text>
</comment>
<evidence type="ECO:0000255" key="1">
    <source>
        <dbReference type="HAMAP-Rule" id="MF_02111"/>
    </source>
</evidence>
<evidence type="ECO:0000305" key="2"/>
<name>PAFA1_RHOER</name>
<organism>
    <name type="scientific">Rhodococcus erythropolis</name>
    <name type="common">Arthrobacter picolinophilus</name>
    <dbReference type="NCBI Taxonomy" id="1833"/>
    <lineage>
        <taxon>Bacteria</taxon>
        <taxon>Bacillati</taxon>
        <taxon>Actinomycetota</taxon>
        <taxon>Actinomycetes</taxon>
        <taxon>Mycobacteriales</taxon>
        <taxon>Nocardiaceae</taxon>
        <taxon>Rhodococcus</taxon>
        <taxon>Rhodococcus erythropolis group</taxon>
    </lineage>
</organism>
<proteinExistence type="inferred from homology"/>
<dbReference type="EC" id="6.3.1.19" evidence="1"/>
<dbReference type="EMBL" id="Z82004">
    <property type="protein sequence ID" value="CAB04762.1"/>
    <property type="status" value="ALT_INIT"/>
    <property type="molecule type" value="Genomic_DNA"/>
</dbReference>
<dbReference type="RefSeq" id="WP_192582067.1">
    <property type="nucleotide sequence ID" value="NZ_JABBPH010000001.1"/>
</dbReference>
<dbReference type="SMR" id="P72263"/>
<dbReference type="UniPathway" id="UPA00997"/>
<dbReference type="UniPathway" id="UPA00998"/>
<dbReference type="GO" id="GO:0005524">
    <property type="term" value="F:ATP binding"/>
    <property type="evidence" value="ECO:0007669"/>
    <property type="project" value="UniProtKB-UniRule"/>
</dbReference>
<dbReference type="GO" id="GO:0016879">
    <property type="term" value="F:ligase activity, forming carbon-nitrogen bonds"/>
    <property type="evidence" value="ECO:0007669"/>
    <property type="project" value="InterPro"/>
</dbReference>
<dbReference type="GO" id="GO:0000287">
    <property type="term" value="F:magnesium ion binding"/>
    <property type="evidence" value="ECO:0007669"/>
    <property type="project" value="UniProtKB-UniRule"/>
</dbReference>
<dbReference type="GO" id="GO:0019787">
    <property type="term" value="F:ubiquitin-like protein transferase activity"/>
    <property type="evidence" value="ECO:0007669"/>
    <property type="project" value="UniProtKB-UniRule"/>
</dbReference>
<dbReference type="GO" id="GO:0019941">
    <property type="term" value="P:modification-dependent protein catabolic process"/>
    <property type="evidence" value="ECO:0007669"/>
    <property type="project" value="UniProtKB-UniRule"/>
</dbReference>
<dbReference type="GO" id="GO:0010498">
    <property type="term" value="P:proteasomal protein catabolic process"/>
    <property type="evidence" value="ECO:0007669"/>
    <property type="project" value="UniProtKB-UniRule"/>
</dbReference>
<dbReference type="GO" id="GO:0070490">
    <property type="term" value="P:protein pupylation"/>
    <property type="evidence" value="ECO:0007669"/>
    <property type="project" value="UniProtKB-UniRule"/>
</dbReference>
<dbReference type="HAMAP" id="MF_02111">
    <property type="entry name" value="Pup_ligase"/>
    <property type="match status" value="1"/>
</dbReference>
<dbReference type="InterPro" id="IPR022279">
    <property type="entry name" value="Pup_ligase"/>
</dbReference>
<dbReference type="InterPro" id="IPR004347">
    <property type="entry name" value="Pup_ligase/deamidase"/>
</dbReference>
<dbReference type="NCBIfam" id="TIGR03686">
    <property type="entry name" value="pupylate_PafA"/>
    <property type="match status" value="1"/>
</dbReference>
<dbReference type="PANTHER" id="PTHR42307">
    <property type="entry name" value="PUP DEAMIDASE/DEPUPYLASE"/>
    <property type="match status" value="1"/>
</dbReference>
<dbReference type="PANTHER" id="PTHR42307:SF3">
    <property type="entry name" value="PUP--PROTEIN LIGASE"/>
    <property type="match status" value="1"/>
</dbReference>
<dbReference type="Pfam" id="PF03136">
    <property type="entry name" value="Pup_ligase"/>
    <property type="match status" value="1"/>
</dbReference>
<dbReference type="PIRSF" id="PIRSF018077">
    <property type="entry name" value="UCP018077"/>
    <property type="match status" value="1"/>
</dbReference>
<protein>
    <recommendedName>
        <fullName evidence="1">Pup--protein ligase 1</fullName>
        <ecNumber evidence="1">6.3.1.19</ecNumber>
    </recommendedName>
    <alternativeName>
        <fullName evidence="1">Proteasome accessory factor A 1</fullName>
    </alternativeName>
    <alternativeName>
        <fullName evidence="1">Pup-conjugating enzyme 1</fullName>
    </alternativeName>
</protein>
<accession>P72263</accession>
<keyword id="KW-0067">ATP-binding</keyword>
<keyword id="KW-0436">Ligase</keyword>
<keyword id="KW-0460">Magnesium</keyword>
<keyword id="KW-0479">Metal-binding</keyword>
<keyword id="KW-0547">Nucleotide-binding</keyword>
<keyword id="KW-0833">Ubl conjugation pathway</keyword>
<feature type="chain" id="PRO_0000395944" description="Pup--protein ligase 1">
    <location>
        <begin position="1"/>
        <end position="452"/>
    </location>
</feature>
<feature type="active site" description="Proton acceptor" evidence="1">
    <location>
        <position position="57"/>
    </location>
</feature>
<feature type="binding site" evidence="1">
    <location>
        <position position="9"/>
    </location>
    <ligand>
        <name>Mg(2+)</name>
        <dbReference type="ChEBI" id="CHEBI:18420"/>
    </ligand>
</feature>
<feature type="binding site" evidence="1">
    <location>
        <position position="53"/>
    </location>
    <ligand>
        <name>ATP</name>
        <dbReference type="ChEBI" id="CHEBI:30616"/>
    </ligand>
</feature>
<feature type="binding site" evidence="1">
    <location>
        <position position="55"/>
    </location>
    <ligand>
        <name>Mg(2+)</name>
        <dbReference type="ChEBI" id="CHEBI:18420"/>
    </ligand>
</feature>
<feature type="binding site" evidence="1">
    <location>
        <position position="63"/>
    </location>
    <ligand>
        <name>Mg(2+)</name>
        <dbReference type="ChEBI" id="CHEBI:18420"/>
    </ligand>
</feature>
<feature type="binding site" evidence="1">
    <location>
        <position position="66"/>
    </location>
    <ligand>
        <name>ATP</name>
        <dbReference type="ChEBI" id="CHEBI:30616"/>
    </ligand>
</feature>
<feature type="binding site" evidence="1">
    <location>
        <position position="419"/>
    </location>
    <ligand>
        <name>ATP</name>
        <dbReference type="ChEBI" id="CHEBI:30616"/>
    </ligand>
</feature>
<sequence length="452" mass="51260">MQRRIMGIETEFGVTCTFHGHRRLSPDEVARYLFRRVVSWGRSSNVFLRNGARLYLDVGSHPEYATAECDNLIQLVNHDRAGERVLEELLIDAEQRLAEEGIGGDIYLFKNNTDSAGNSYGCHENFLVARAGEFSRISDVLLPFLVTRQLICGAGKVLQTPKAATFCLSQRAEHIWEGVSSATTRSRPIINTRDEPHADAEKYRRLHVIVGDSNMSESTTMLKVGTAALVLEMIEAGVSFRDFALDNPIRAIREVSHDVTGRRPVRLAGGRQASALDIQREYHARAVEHLQNREPDPQVTQVVELWGRMLDAVETQDFAKVDTEIDWVIKRKLFQRYQDRHGFELADPKIAQLDLAYHDIKRGRGVFDVLQRKGLVKRITEDETIEAAVDTPPQTTRAKLRGEFITAAQEAGRDFTVDWVHLKLNDQAQRTVLCKDPFRSVDERVERLIASM</sequence>